<name>CHED_VIBVY</name>
<reference key="1">
    <citation type="journal article" date="2003" name="Genome Res.">
        <title>Comparative genome analysis of Vibrio vulnificus, a marine pathogen.</title>
        <authorList>
            <person name="Chen C.-Y."/>
            <person name="Wu K.-M."/>
            <person name="Chang Y.-C."/>
            <person name="Chang C.-H."/>
            <person name="Tsai H.-C."/>
            <person name="Liao T.-L."/>
            <person name="Liu Y.-M."/>
            <person name="Chen H.-J."/>
            <person name="Shen A.B.-T."/>
            <person name="Li J.-C."/>
            <person name="Su T.-L."/>
            <person name="Shao C.-P."/>
            <person name="Lee C.-T."/>
            <person name="Hor L.-I."/>
            <person name="Tsai S.-F."/>
        </authorList>
    </citation>
    <scope>NUCLEOTIDE SEQUENCE [LARGE SCALE GENOMIC DNA]</scope>
    <source>
        <strain>YJ016</strain>
    </source>
</reference>
<accession>Q7MBQ4</accession>
<dbReference type="EC" id="3.5.1.44" evidence="1"/>
<dbReference type="EMBL" id="BA000038">
    <property type="protein sequence ID" value="BAC97712.1"/>
    <property type="molecule type" value="Genomic_DNA"/>
</dbReference>
<dbReference type="RefSeq" id="WP_011152867.1">
    <property type="nucleotide sequence ID" value="NC_005140.1"/>
</dbReference>
<dbReference type="SMR" id="Q7MBQ4"/>
<dbReference type="STRING" id="672.VV93_v1c45440"/>
<dbReference type="KEGG" id="vvy:VVA1686"/>
<dbReference type="PATRIC" id="fig|196600.6.peg.4809"/>
<dbReference type="eggNOG" id="COG1871">
    <property type="taxonomic scope" value="Bacteria"/>
</dbReference>
<dbReference type="HOGENOM" id="CLU_087854_0_0_6"/>
<dbReference type="Proteomes" id="UP000002675">
    <property type="component" value="Chromosome II"/>
</dbReference>
<dbReference type="GO" id="GO:0050568">
    <property type="term" value="F:protein-glutamine glutaminase activity"/>
    <property type="evidence" value="ECO:0007669"/>
    <property type="project" value="UniProtKB-UniRule"/>
</dbReference>
<dbReference type="GO" id="GO:0006935">
    <property type="term" value="P:chemotaxis"/>
    <property type="evidence" value="ECO:0007669"/>
    <property type="project" value="UniProtKB-UniRule"/>
</dbReference>
<dbReference type="CDD" id="cd16352">
    <property type="entry name" value="CheD"/>
    <property type="match status" value="1"/>
</dbReference>
<dbReference type="Gene3D" id="3.30.1330.200">
    <property type="match status" value="1"/>
</dbReference>
<dbReference type="HAMAP" id="MF_01440">
    <property type="entry name" value="CheD"/>
    <property type="match status" value="1"/>
</dbReference>
<dbReference type="InterPro" id="IPR038592">
    <property type="entry name" value="CheD-like_sf"/>
</dbReference>
<dbReference type="InterPro" id="IPR005659">
    <property type="entry name" value="Chemorcpt_Glu_NH3ase_CheD"/>
</dbReference>
<dbReference type="InterPro" id="IPR011324">
    <property type="entry name" value="Cytotoxic_necrot_fac-like_cat"/>
</dbReference>
<dbReference type="NCBIfam" id="NF010016">
    <property type="entry name" value="PRK13493.1"/>
    <property type="match status" value="1"/>
</dbReference>
<dbReference type="PANTHER" id="PTHR35147">
    <property type="entry name" value="CHEMORECEPTOR GLUTAMINE DEAMIDASE CHED-RELATED"/>
    <property type="match status" value="1"/>
</dbReference>
<dbReference type="PANTHER" id="PTHR35147:SF2">
    <property type="entry name" value="CHEMORECEPTOR GLUTAMINE DEAMIDASE CHED-RELATED"/>
    <property type="match status" value="1"/>
</dbReference>
<dbReference type="Pfam" id="PF03975">
    <property type="entry name" value="CheD"/>
    <property type="match status" value="1"/>
</dbReference>
<dbReference type="SUPFAM" id="SSF64438">
    <property type="entry name" value="CNF1/YfiH-like putative cysteine hydrolases"/>
    <property type="match status" value="1"/>
</dbReference>
<evidence type="ECO:0000255" key="1">
    <source>
        <dbReference type="HAMAP-Rule" id="MF_01440"/>
    </source>
</evidence>
<protein>
    <recommendedName>
        <fullName evidence="1">Probable chemoreceptor glutamine deamidase CheD</fullName>
        <ecNumber evidence="1">3.5.1.44</ecNumber>
    </recommendedName>
</protein>
<feature type="chain" id="PRO_0000251078" description="Probable chemoreceptor glutamine deamidase CheD">
    <location>
        <begin position="1"/>
        <end position="214"/>
    </location>
</feature>
<sequence>MMLDPINHHFQAHEEAYYSRFFNEQRGLHMIKVLPGGVYVSGQEELICTGLGSCVSACIWDPVKRVGGMNHFLLPFHNHFEEKHWHADELLSGASRYGSYAMEMLLNQLLSLGARRERLRMKLFGGAQMMGFHSMIGEKNVEFVLHYAEQEGLEVVAYDLGGLEPRKIMFDPLTGKAWLKRIPFAEINRLRREEERYAHTLEKQTDKGSEVELF</sequence>
<proteinExistence type="inferred from homology"/>
<comment type="function">
    <text evidence="1">Probably deamidates glutamine residues to glutamate on methyl-accepting chemotaxis receptors (MCPs), playing an important role in chemotaxis.</text>
</comment>
<comment type="catalytic activity">
    <reaction evidence="1">
        <text>L-glutaminyl-[protein] + H2O = L-glutamyl-[protein] + NH4(+)</text>
        <dbReference type="Rhea" id="RHEA:16441"/>
        <dbReference type="Rhea" id="RHEA-COMP:10207"/>
        <dbReference type="Rhea" id="RHEA-COMP:10208"/>
        <dbReference type="ChEBI" id="CHEBI:15377"/>
        <dbReference type="ChEBI" id="CHEBI:28938"/>
        <dbReference type="ChEBI" id="CHEBI:29973"/>
        <dbReference type="ChEBI" id="CHEBI:30011"/>
        <dbReference type="EC" id="3.5.1.44"/>
    </reaction>
</comment>
<comment type="similarity">
    <text evidence="1">Belongs to the CheD family.</text>
</comment>
<organism>
    <name type="scientific">Vibrio vulnificus (strain YJ016)</name>
    <dbReference type="NCBI Taxonomy" id="196600"/>
    <lineage>
        <taxon>Bacteria</taxon>
        <taxon>Pseudomonadati</taxon>
        <taxon>Pseudomonadota</taxon>
        <taxon>Gammaproteobacteria</taxon>
        <taxon>Vibrionales</taxon>
        <taxon>Vibrionaceae</taxon>
        <taxon>Vibrio</taxon>
    </lineage>
</organism>
<keyword id="KW-0145">Chemotaxis</keyword>
<keyword id="KW-0378">Hydrolase</keyword>
<gene>
    <name evidence="1" type="primary">cheD</name>
    <name type="ordered locus">VVA1686</name>
</gene>